<dbReference type="EMBL" id="BC066561">
    <property type="protein sequence ID" value="AAH66561.1"/>
    <property type="molecule type" value="mRNA"/>
</dbReference>
<dbReference type="RefSeq" id="NP_998399.1">
    <property type="nucleotide sequence ID" value="NM_213234.1"/>
</dbReference>
<dbReference type="SMR" id="Q6NYK3"/>
<dbReference type="FunCoup" id="Q6NYK3">
    <property type="interactions" value="1063"/>
</dbReference>
<dbReference type="STRING" id="7955.ENSDARP00000045291"/>
<dbReference type="PaxDb" id="7955-ENSDARP00000045291"/>
<dbReference type="GeneID" id="793290"/>
<dbReference type="KEGG" id="dre:793290"/>
<dbReference type="AGR" id="ZFIN:ZDB-GENE-040426-2342"/>
<dbReference type="CTD" id="793290"/>
<dbReference type="ZFIN" id="ZDB-GENE-040426-2342">
    <property type="gene designation" value="spred2b"/>
</dbReference>
<dbReference type="eggNOG" id="KOG4590">
    <property type="taxonomic scope" value="Eukaryota"/>
</dbReference>
<dbReference type="InParanoid" id="Q6NYK3"/>
<dbReference type="OrthoDB" id="5786858at2759"/>
<dbReference type="PhylomeDB" id="Q6NYK3"/>
<dbReference type="Reactome" id="R-DRE-5658623">
    <property type="pathway name" value="FGFRL1 modulation of FGFR1 signaling"/>
</dbReference>
<dbReference type="PRO" id="PR:Q6NYK3"/>
<dbReference type="Proteomes" id="UP000000437">
    <property type="component" value="Chromosome 13"/>
</dbReference>
<dbReference type="GO" id="GO:0005886">
    <property type="term" value="C:plasma membrane"/>
    <property type="evidence" value="ECO:0000318"/>
    <property type="project" value="GO_Central"/>
</dbReference>
<dbReference type="GO" id="GO:0030658">
    <property type="term" value="C:transport vesicle membrane"/>
    <property type="evidence" value="ECO:0007669"/>
    <property type="project" value="UniProtKB-SubCell"/>
</dbReference>
<dbReference type="GO" id="GO:0019901">
    <property type="term" value="F:protein kinase binding"/>
    <property type="evidence" value="ECO:0000318"/>
    <property type="project" value="GO_Central"/>
</dbReference>
<dbReference type="GO" id="GO:0070373">
    <property type="term" value="P:negative regulation of ERK1 and ERK2 cascade"/>
    <property type="evidence" value="ECO:0000318"/>
    <property type="project" value="GO_Central"/>
</dbReference>
<dbReference type="CDD" id="cd10574">
    <property type="entry name" value="EVH1_SPRED-like"/>
    <property type="match status" value="1"/>
</dbReference>
<dbReference type="FunFam" id="2.30.29.30:FF:000052">
    <property type="entry name" value="Sprouty-related, EVH1 domain containing 2"/>
    <property type="match status" value="1"/>
</dbReference>
<dbReference type="Gene3D" id="2.30.29.30">
    <property type="entry name" value="Pleckstrin-homology domain (PH domain)/Phosphotyrosine-binding domain (PTB)"/>
    <property type="match status" value="1"/>
</dbReference>
<dbReference type="InterPro" id="IPR023337">
    <property type="entry name" value="KBD"/>
</dbReference>
<dbReference type="InterPro" id="IPR011993">
    <property type="entry name" value="PH-like_dom_sf"/>
</dbReference>
<dbReference type="InterPro" id="IPR041937">
    <property type="entry name" value="SPRE_EVH1"/>
</dbReference>
<dbReference type="InterPro" id="IPR007875">
    <property type="entry name" value="Sprouty"/>
</dbReference>
<dbReference type="InterPro" id="IPR000697">
    <property type="entry name" value="WH1/EVH1_dom"/>
</dbReference>
<dbReference type="PANTHER" id="PTHR11202:SF11">
    <property type="entry name" value="SPROUTY-RELATED, EVH1 DOMAIN-CONTAINING PROTEIN 2"/>
    <property type="match status" value="1"/>
</dbReference>
<dbReference type="PANTHER" id="PTHR11202">
    <property type="entry name" value="SPROUTY-RELATED, EVH1 DOMAIN-CONTAINING PROTEIN FAMILY MEMBER"/>
    <property type="match status" value="1"/>
</dbReference>
<dbReference type="Pfam" id="PF05210">
    <property type="entry name" value="Sprouty"/>
    <property type="match status" value="1"/>
</dbReference>
<dbReference type="Pfam" id="PF00568">
    <property type="entry name" value="WH1"/>
    <property type="match status" value="1"/>
</dbReference>
<dbReference type="SMART" id="SM00461">
    <property type="entry name" value="WH1"/>
    <property type="match status" value="1"/>
</dbReference>
<dbReference type="SUPFAM" id="SSF50729">
    <property type="entry name" value="PH domain-like"/>
    <property type="match status" value="1"/>
</dbReference>
<dbReference type="PROSITE" id="PS51488">
    <property type="entry name" value="KBD"/>
    <property type="match status" value="1"/>
</dbReference>
<dbReference type="PROSITE" id="PS51227">
    <property type="entry name" value="SPR"/>
    <property type="match status" value="1"/>
</dbReference>
<dbReference type="PROSITE" id="PS50229">
    <property type="entry name" value="WH1"/>
    <property type="match status" value="1"/>
</dbReference>
<sequence>MIEETHPNDDSYIVRVKAVVMTRDDSSGGWLAQEGGGLSRVGVCKVMPAELTGRSDFLIHGERLKDKQVILECFVRKDLIYTKATPTFHHWKVDNKKCGLTFQSPADARAFDRGVRKALEDLTEGSTTSSSTLQNEAELGDDDVFTTATDSSSNSSQKKDHSTQLVATSTFYEPHPHRCILQYRPPERYTLDQKFSRNLFPFEDEEIVRINPRERWMITGYEDYRYAAVPDKFIQPEDSDSYVQISKNDPVKHDYTYPYVPSPDFTQCDLKRPCGGGSTVVSTQPRAFILKGKRRKEDGERSRCVYCRDMFNHEENRRGQCHDAPDPIRTCIHRVSFMWCADSMLYHCMSDPEGDYSDPCSCDTSEERFCLRWTALLGLAMLAPCLCCYPPLHGCHRCGVACGCCGGKHKAVG</sequence>
<gene>
    <name type="primary">spred2</name>
    <name type="ORF">zgc:77284</name>
</gene>
<proteinExistence type="evidence at transcript level"/>
<feature type="chain" id="PRO_0000076913" description="Sprouty-related, EVH1 domain-containing protein 2">
    <location>
        <begin position="1"/>
        <end position="413"/>
    </location>
</feature>
<feature type="domain" description="WH1" evidence="3">
    <location>
        <begin position="5"/>
        <end position="122"/>
    </location>
</feature>
<feature type="domain" description="KBD" evidence="5">
    <location>
        <begin position="195"/>
        <end position="248"/>
    </location>
</feature>
<feature type="domain" description="SPR" evidence="4">
    <location>
        <begin position="303"/>
        <end position="411"/>
    </location>
</feature>
<feature type="region of interest" description="Disordered" evidence="6">
    <location>
        <begin position="122"/>
        <end position="163"/>
    </location>
</feature>
<accession>Q6NYK3</accession>
<reference key="1">
    <citation type="submission" date="2004-02" db="EMBL/GenBank/DDBJ databases">
        <authorList>
            <consortium name="NIH - Zebrafish Gene Collection (ZGC) project"/>
        </authorList>
    </citation>
    <scope>NUCLEOTIDE SEQUENCE [LARGE SCALE MRNA]</scope>
    <source>
        <tissue>Embryo</tissue>
    </source>
</reference>
<reference key="2">
    <citation type="journal article" date="2021" name="Am. J. Hum. Genet.">
        <title>SPRED2 loss-of-function causes a recessive Noonan syndrome-like phenotype.</title>
        <authorList>
            <person name="Motta M."/>
            <person name="Fasano G."/>
            <person name="Gredy S."/>
            <person name="Brinkmann J."/>
            <person name="Bonnard A.A."/>
            <person name="Simsek-Kiper P.O."/>
            <person name="Gulec E.Y."/>
            <person name="Essaddam L."/>
            <person name="Utine G.E."/>
            <person name="Guarnetti Prandi I."/>
            <person name="Venditti M."/>
            <person name="Pantaleoni F."/>
            <person name="Radio F.C."/>
            <person name="Ciolfi A."/>
            <person name="Petrini S."/>
            <person name="Consoli F."/>
            <person name="Vignal C."/>
            <person name="Hepbasli D."/>
            <person name="Ullrich M."/>
            <person name="de Boer E."/>
            <person name="Vissers L.E.L.M."/>
            <person name="Gritli S."/>
            <person name="Rossi C."/>
            <person name="De Luca A."/>
            <person name="Ben Becher S."/>
            <person name="Gelb B.D."/>
            <person name="Dallapiccola B."/>
            <person name="Lauri A."/>
            <person name="Chillemi G."/>
            <person name="Schuh K."/>
            <person name="Cave H."/>
            <person name="Zenker M."/>
            <person name="Tartaglia M."/>
        </authorList>
    </citation>
    <scope>DISRUPTION PHENOTYPE</scope>
</reference>
<name>SPRE2_DANRE</name>
<keyword id="KW-1003">Cell membrane</keyword>
<keyword id="KW-0963">Cytoplasm</keyword>
<keyword id="KW-0968">Cytoplasmic vesicle</keyword>
<keyword id="KW-0472">Membrane</keyword>
<keyword id="KW-1185">Reference proteome</keyword>
<organism>
    <name type="scientific">Danio rerio</name>
    <name type="common">Zebrafish</name>
    <name type="synonym">Brachydanio rerio</name>
    <dbReference type="NCBI Taxonomy" id="7955"/>
    <lineage>
        <taxon>Eukaryota</taxon>
        <taxon>Metazoa</taxon>
        <taxon>Chordata</taxon>
        <taxon>Craniata</taxon>
        <taxon>Vertebrata</taxon>
        <taxon>Euteleostomi</taxon>
        <taxon>Actinopterygii</taxon>
        <taxon>Neopterygii</taxon>
        <taxon>Teleostei</taxon>
        <taxon>Ostariophysi</taxon>
        <taxon>Cypriniformes</taxon>
        <taxon>Danionidae</taxon>
        <taxon>Danioninae</taxon>
        <taxon>Danio</taxon>
    </lineage>
</organism>
<protein>
    <recommendedName>
        <fullName>Sprouty-related, EVH1 domain-containing protein 2</fullName>
        <shortName>Spred-2</shortName>
    </recommendedName>
</protein>
<comment type="function">
    <text evidence="1">Negatively regulates Ras signaling pathways and downstream activation of MAP kinases.</text>
</comment>
<comment type="subcellular location">
    <subcellularLocation>
        <location evidence="2">Cell membrane</location>
        <topology evidence="2">Peripheral membrane protein</topology>
        <orientation evidence="2">Cytoplasmic side</orientation>
    </subcellularLocation>
    <subcellularLocation>
        <location evidence="1">Cytoplasmic vesicle</location>
        <location evidence="1">Secretory vesicle membrane</location>
        <topology evidence="1">Peripheral membrane protein</topology>
        <orientation evidence="1">Cytoplasmic side</orientation>
    </subcellularLocation>
    <subcellularLocation>
        <location evidence="1">Cytoplasm</location>
    </subcellularLocation>
</comment>
<comment type="disruption phenotype">
    <text evidence="7">Morpholino knockdown is associated with increased Erk phosphorylation levels and results in a high incidence of embryos showing delayed gastrulation, or delay in elongation during the segmentation stage, with reduced formation of the head and tailbud. Morphants show yolk elongation at 12 hours post-fertilization, indicating enhanced MAPK signaling.</text>
</comment>
<evidence type="ECO:0000250" key="1">
    <source>
        <dbReference type="UniProtKB" id="Q7Z698"/>
    </source>
</evidence>
<evidence type="ECO:0000250" key="2">
    <source>
        <dbReference type="UniProtKB" id="Q924S7"/>
    </source>
</evidence>
<evidence type="ECO:0000255" key="3">
    <source>
        <dbReference type="PROSITE-ProRule" id="PRU00410"/>
    </source>
</evidence>
<evidence type="ECO:0000255" key="4">
    <source>
        <dbReference type="PROSITE-ProRule" id="PRU00572"/>
    </source>
</evidence>
<evidence type="ECO:0000255" key="5">
    <source>
        <dbReference type="PROSITE-ProRule" id="PRU00821"/>
    </source>
</evidence>
<evidence type="ECO:0000256" key="6">
    <source>
        <dbReference type="SAM" id="MobiDB-lite"/>
    </source>
</evidence>
<evidence type="ECO:0000269" key="7">
    <source>
    </source>
</evidence>